<keyword id="KW-0106">Calcium</keyword>
<keyword id="KW-1015">Disulfide bond</keyword>
<keyword id="KW-0325">Glycoprotein</keyword>
<keyword id="KW-0349">Heme</keyword>
<keyword id="KW-0376">Hydrogen peroxide</keyword>
<keyword id="KW-0408">Iron</keyword>
<keyword id="KW-0458">Lysosome</keyword>
<keyword id="KW-0479">Metal-binding</keyword>
<keyword id="KW-0558">Oxidation</keyword>
<keyword id="KW-0560">Oxidoreductase</keyword>
<keyword id="KW-0575">Peroxidase</keyword>
<keyword id="KW-1185">Reference proteome</keyword>
<keyword id="KW-0732">Signal</keyword>
<dbReference type="EC" id="1.11.2.2" evidence="5"/>
<dbReference type="EMBL" id="X15313">
    <property type="protein sequence ID" value="CAA33373.1"/>
    <property type="molecule type" value="mRNA"/>
</dbReference>
<dbReference type="EMBL" id="X15378">
    <property type="protein sequence ID" value="CAA33439.1"/>
    <property type="molecule type" value="Genomic_DNA"/>
</dbReference>
<dbReference type="EMBL" id="AL604022">
    <property type="status" value="NOT_ANNOTATED_CDS"/>
    <property type="molecule type" value="Genomic_DNA"/>
</dbReference>
<dbReference type="CCDS" id="CCDS25217.1"/>
<dbReference type="PIR" id="S06068">
    <property type="entry name" value="S06068"/>
</dbReference>
<dbReference type="RefSeq" id="NP_034954.2">
    <property type="nucleotide sequence ID" value="NM_010824.2"/>
</dbReference>
<dbReference type="SMR" id="P11247"/>
<dbReference type="BioGRID" id="201479">
    <property type="interactions" value="2"/>
</dbReference>
<dbReference type="FunCoup" id="P11247">
    <property type="interactions" value="461"/>
</dbReference>
<dbReference type="IntAct" id="P11247">
    <property type="interactions" value="1"/>
</dbReference>
<dbReference type="STRING" id="10090.ENSMUSP00000020779"/>
<dbReference type="BindingDB" id="P11247"/>
<dbReference type="ChEMBL" id="CHEMBL2440"/>
<dbReference type="PeroxiBase" id="3344">
    <property type="entry name" value="MmMPO"/>
</dbReference>
<dbReference type="CarbonylDB" id="P11247"/>
<dbReference type="GlyConnect" id="2522">
    <property type="glycosylation" value="2 N-Linked glycans (2 sites)"/>
</dbReference>
<dbReference type="GlyCosmos" id="P11247">
    <property type="glycosylation" value="6 sites, 2 glycans"/>
</dbReference>
<dbReference type="GlyGen" id="P11247">
    <property type="glycosylation" value="8 sites, 6 N-linked glycans (4 sites)"/>
</dbReference>
<dbReference type="iPTMnet" id="P11247"/>
<dbReference type="PhosphoSitePlus" id="P11247"/>
<dbReference type="CPTAC" id="non-CPTAC-3375"/>
<dbReference type="jPOST" id="P11247"/>
<dbReference type="PaxDb" id="10090-ENSMUSP00000020779"/>
<dbReference type="PeptideAtlas" id="P11247"/>
<dbReference type="ProteomicsDB" id="288034"/>
<dbReference type="ABCD" id="P11247">
    <property type="antibodies" value="6 sequenced antibodies"/>
</dbReference>
<dbReference type="Antibodypedia" id="3513">
    <property type="antibodies" value="1867 antibodies from 56 providers"/>
</dbReference>
<dbReference type="DNASU" id="17523"/>
<dbReference type="Ensembl" id="ENSMUST00000020779.11">
    <property type="protein sequence ID" value="ENSMUSP00000020779.5"/>
    <property type="gene ID" value="ENSMUSG00000009350.14"/>
</dbReference>
<dbReference type="Ensembl" id="ENSMUST00000121303.8">
    <property type="protein sequence ID" value="ENSMUSP00000112837.2"/>
    <property type="gene ID" value="ENSMUSG00000009350.14"/>
</dbReference>
<dbReference type="GeneID" id="17523"/>
<dbReference type="KEGG" id="mmu:17523"/>
<dbReference type="UCSC" id="uc011ycc.1">
    <property type="organism name" value="mouse"/>
</dbReference>
<dbReference type="AGR" id="MGI:97137"/>
<dbReference type="CTD" id="4353"/>
<dbReference type="MGI" id="MGI:97137">
    <property type="gene designation" value="Mpo"/>
</dbReference>
<dbReference type="VEuPathDB" id="HostDB:ENSMUSG00000009350"/>
<dbReference type="eggNOG" id="KOG2408">
    <property type="taxonomic scope" value="Eukaryota"/>
</dbReference>
<dbReference type="GeneTree" id="ENSGT00940000161343"/>
<dbReference type="HOGENOM" id="CLU_006087_1_1_1"/>
<dbReference type="InParanoid" id="P11247"/>
<dbReference type="OMA" id="RYQPMGP"/>
<dbReference type="OrthoDB" id="823504at2759"/>
<dbReference type="PhylomeDB" id="P11247"/>
<dbReference type="TreeFam" id="TF314316"/>
<dbReference type="Reactome" id="R-MMU-6798695">
    <property type="pathway name" value="Neutrophil degranulation"/>
</dbReference>
<dbReference type="Reactome" id="R-MMU-8941413">
    <property type="pathway name" value="Events associated with phagocytolytic activity of PMN cells"/>
</dbReference>
<dbReference type="BioGRID-ORCS" id="17523">
    <property type="hits" value="2 hits in 78 CRISPR screens"/>
</dbReference>
<dbReference type="ChiTaRS" id="Mpo">
    <property type="organism name" value="mouse"/>
</dbReference>
<dbReference type="PRO" id="PR:P11247"/>
<dbReference type="Proteomes" id="UP000000589">
    <property type="component" value="Chromosome 11"/>
</dbReference>
<dbReference type="RNAct" id="P11247">
    <property type="molecule type" value="protein"/>
</dbReference>
<dbReference type="Bgee" id="ENSMUSG00000009350">
    <property type="expression patterns" value="Expressed in femorotibial joint and 76 other cell types or tissues"/>
</dbReference>
<dbReference type="ExpressionAtlas" id="P11247">
    <property type="expression patterns" value="baseline and differential"/>
</dbReference>
<dbReference type="GO" id="GO:0042582">
    <property type="term" value="C:azurophil granule"/>
    <property type="evidence" value="ECO:0000250"/>
    <property type="project" value="UniProtKB"/>
</dbReference>
<dbReference type="GO" id="GO:0005615">
    <property type="term" value="C:extracellular space"/>
    <property type="evidence" value="ECO:0007669"/>
    <property type="project" value="Ensembl"/>
</dbReference>
<dbReference type="GO" id="GO:0005739">
    <property type="term" value="C:mitochondrion"/>
    <property type="evidence" value="ECO:0007005"/>
    <property type="project" value="MGI"/>
</dbReference>
<dbReference type="GO" id="GO:0005654">
    <property type="term" value="C:nucleoplasm"/>
    <property type="evidence" value="ECO:0007669"/>
    <property type="project" value="Ensembl"/>
</dbReference>
<dbReference type="GO" id="GO:0030141">
    <property type="term" value="C:secretory granule"/>
    <property type="evidence" value="ECO:0000266"/>
    <property type="project" value="MGI"/>
</dbReference>
<dbReference type="GO" id="GO:0020037">
    <property type="term" value="F:heme binding"/>
    <property type="evidence" value="ECO:0007669"/>
    <property type="project" value="InterPro"/>
</dbReference>
<dbReference type="GO" id="GO:0008201">
    <property type="term" value="F:heparin binding"/>
    <property type="evidence" value="ECO:0000266"/>
    <property type="project" value="MGI"/>
</dbReference>
<dbReference type="GO" id="GO:0046872">
    <property type="term" value="F:metal ion binding"/>
    <property type="evidence" value="ECO:0007669"/>
    <property type="project" value="UniProtKB-KW"/>
</dbReference>
<dbReference type="GO" id="GO:0004601">
    <property type="term" value="F:peroxidase activity"/>
    <property type="evidence" value="ECO:0000314"/>
    <property type="project" value="MGI"/>
</dbReference>
<dbReference type="GO" id="GO:0050832">
    <property type="term" value="P:defense response to fungus"/>
    <property type="evidence" value="ECO:0000315"/>
    <property type="project" value="MGI"/>
</dbReference>
<dbReference type="GO" id="GO:0042744">
    <property type="term" value="P:hydrogen peroxide catabolic process"/>
    <property type="evidence" value="ECO:0000314"/>
    <property type="project" value="MGI"/>
</dbReference>
<dbReference type="GO" id="GO:0002149">
    <property type="term" value="P:hypochlorous acid biosynthetic process"/>
    <property type="evidence" value="ECO:0000315"/>
    <property type="project" value="MGI"/>
</dbReference>
<dbReference type="GO" id="GO:0034374">
    <property type="term" value="P:low-density lipoprotein particle remodeling"/>
    <property type="evidence" value="ECO:0007669"/>
    <property type="project" value="Ensembl"/>
</dbReference>
<dbReference type="GO" id="GO:0019430">
    <property type="term" value="P:removal of superoxide radicals"/>
    <property type="evidence" value="ECO:0000315"/>
    <property type="project" value="MGI"/>
</dbReference>
<dbReference type="GO" id="GO:0002679">
    <property type="term" value="P:respiratory burst involved in defense response"/>
    <property type="evidence" value="ECO:0000315"/>
    <property type="project" value="MGI"/>
</dbReference>
<dbReference type="GO" id="GO:0032094">
    <property type="term" value="P:response to food"/>
    <property type="evidence" value="ECO:0007669"/>
    <property type="project" value="Ensembl"/>
</dbReference>
<dbReference type="GO" id="GO:1990268">
    <property type="term" value="P:response to gold nanoparticle"/>
    <property type="evidence" value="ECO:0007669"/>
    <property type="project" value="Ensembl"/>
</dbReference>
<dbReference type="GO" id="GO:0032496">
    <property type="term" value="P:response to lipopolysaccharide"/>
    <property type="evidence" value="ECO:0007669"/>
    <property type="project" value="Ensembl"/>
</dbReference>
<dbReference type="GO" id="GO:0009612">
    <property type="term" value="P:response to mechanical stimulus"/>
    <property type="evidence" value="ECO:0007669"/>
    <property type="project" value="Ensembl"/>
</dbReference>
<dbReference type="GO" id="GO:0001878">
    <property type="term" value="P:response to yeast"/>
    <property type="evidence" value="ECO:0000315"/>
    <property type="project" value="MGI"/>
</dbReference>
<dbReference type="CDD" id="cd09824">
    <property type="entry name" value="myeloperoxidase_like"/>
    <property type="match status" value="1"/>
</dbReference>
<dbReference type="FunFam" id="1.10.640.10:FF:000030">
    <property type="entry name" value="Myeloperoxidase"/>
    <property type="match status" value="1"/>
</dbReference>
<dbReference type="Gene3D" id="1.10.640.10">
    <property type="entry name" value="Haem peroxidase domain superfamily, animal type"/>
    <property type="match status" value="1"/>
</dbReference>
<dbReference type="InterPro" id="IPR019791">
    <property type="entry name" value="Haem_peroxidase_animal"/>
</dbReference>
<dbReference type="InterPro" id="IPR010255">
    <property type="entry name" value="Haem_peroxidase_sf"/>
</dbReference>
<dbReference type="InterPro" id="IPR037120">
    <property type="entry name" value="Haem_peroxidase_sf_animal"/>
</dbReference>
<dbReference type="PANTHER" id="PTHR11475:SF108">
    <property type="entry name" value="MYELOPEROXIDASE"/>
    <property type="match status" value="1"/>
</dbReference>
<dbReference type="PANTHER" id="PTHR11475">
    <property type="entry name" value="OXIDASE/PEROXIDASE"/>
    <property type="match status" value="1"/>
</dbReference>
<dbReference type="Pfam" id="PF03098">
    <property type="entry name" value="An_peroxidase"/>
    <property type="match status" value="1"/>
</dbReference>
<dbReference type="PRINTS" id="PR00457">
    <property type="entry name" value="ANPEROXIDASE"/>
</dbReference>
<dbReference type="SUPFAM" id="SSF48113">
    <property type="entry name" value="Heme-dependent peroxidases"/>
    <property type="match status" value="1"/>
</dbReference>
<dbReference type="PROSITE" id="PS00435">
    <property type="entry name" value="PEROXIDASE_1"/>
    <property type="match status" value="1"/>
</dbReference>
<dbReference type="PROSITE" id="PS50292">
    <property type="entry name" value="PEROXIDASE_3"/>
    <property type="match status" value="1"/>
</dbReference>
<proteinExistence type="evidence at protein level"/>
<feature type="signal peptide">
    <location>
        <begin position="1"/>
        <end position="15"/>
    </location>
</feature>
<feature type="propeptide" id="PRO_0000023657" evidence="3">
    <location>
        <begin position="16"/>
        <end position="138"/>
    </location>
</feature>
<feature type="chain" id="PRO_0000023658" description="Myeloperoxidase">
    <location>
        <begin position="139"/>
        <end position="718"/>
    </location>
</feature>
<feature type="chain" id="PRO_0000023659" description="Myeloperoxidase light chain">
    <location>
        <begin position="139"/>
        <end position="252"/>
    </location>
</feature>
<feature type="chain" id="PRO_0000023660" description="Myeloperoxidase heavy chain">
    <location>
        <begin position="253"/>
        <end position="718"/>
    </location>
</feature>
<feature type="active site" description="Proton acceptor" evidence="4">
    <location>
        <position position="235"/>
    </location>
</feature>
<feature type="binding site" description="covalent" evidence="1">
    <location>
        <position position="234"/>
    </location>
    <ligand>
        <name>heme b</name>
        <dbReference type="ChEBI" id="CHEBI:60344"/>
    </ligand>
</feature>
<feature type="binding site" evidence="4">
    <location>
        <position position="236"/>
    </location>
    <ligand>
        <name>Ca(2+)</name>
        <dbReference type="ChEBI" id="CHEBI:29108"/>
    </ligand>
</feature>
<feature type="binding site" evidence="4">
    <location>
        <position position="308"/>
    </location>
    <ligand>
        <name>Ca(2+)</name>
        <dbReference type="ChEBI" id="CHEBI:29108"/>
    </ligand>
</feature>
<feature type="binding site" evidence="4">
    <location>
        <position position="310"/>
    </location>
    <ligand>
        <name>Ca(2+)</name>
        <dbReference type="ChEBI" id="CHEBI:29108"/>
    </ligand>
</feature>
<feature type="binding site" evidence="4">
    <location>
        <position position="312"/>
    </location>
    <ligand>
        <name>Ca(2+)</name>
        <dbReference type="ChEBI" id="CHEBI:29108"/>
    </ligand>
</feature>
<feature type="binding site" evidence="4">
    <location>
        <position position="314"/>
    </location>
    <ligand>
        <name>Ca(2+)</name>
        <dbReference type="ChEBI" id="CHEBI:29108"/>
    </ligand>
</feature>
<feature type="binding site" description="covalent" evidence="1">
    <location>
        <position position="382"/>
    </location>
    <ligand>
        <name>heme b</name>
        <dbReference type="ChEBI" id="CHEBI:60344"/>
    </ligand>
</feature>
<feature type="binding site" description="covalent" evidence="1">
    <location>
        <position position="383"/>
    </location>
    <ligand>
        <name>heme b</name>
        <dbReference type="ChEBI" id="CHEBI:60344"/>
    </ligand>
</feature>
<feature type="binding site" description="axial binding residue" evidence="4">
    <location>
        <position position="476"/>
    </location>
    <ligand>
        <name>heme b</name>
        <dbReference type="ChEBI" id="CHEBI:60344"/>
    </ligand>
    <ligandPart>
        <name>Fe</name>
        <dbReference type="ChEBI" id="CHEBI:18248"/>
    </ligandPart>
</feature>
<feature type="site" description="Transition state stabilizer" evidence="4">
    <location>
        <position position="379"/>
    </location>
</feature>
<feature type="modified residue" description="Cysteine sulfenic acid (-SOH)" evidence="1">
    <location>
        <position position="290"/>
    </location>
</feature>
<feature type="glycosylation site" description="N-linked (GlcNAc...) asparagine" evidence="3">
    <location>
        <position position="113"/>
    </location>
</feature>
<feature type="glycosylation site" description="N-linked (GlcNAc...) asparagine" evidence="3">
    <location>
        <position position="297"/>
    </location>
</feature>
<feature type="glycosylation site" description="N-linked (GlcNAc...) asparagine" evidence="3">
    <location>
        <position position="329"/>
    </location>
</feature>
<feature type="glycosylation site" description="N-linked (GlcNAc...) asparagine" evidence="3">
    <location>
        <position position="365"/>
    </location>
</feature>
<feature type="glycosylation site" description="N-linked (GlcNAc...) asparagine" evidence="3">
    <location>
        <position position="457"/>
    </location>
</feature>
<feature type="glycosylation site" description="N-linked (GlcNAc...) asparagine" evidence="3">
    <location>
        <position position="711"/>
    </location>
</feature>
<feature type="disulfide bond" evidence="4">
    <location>
        <begin position="141"/>
        <end position="154"/>
    </location>
</feature>
<feature type="disulfide bond" evidence="4">
    <location>
        <begin position="255"/>
        <end position="265"/>
    </location>
</feature>
<feature type="disulfide bond" evidence="4">
    <location>
        <begin position="259"/>
        <end position="283"/>
    </location>
</feature>
<feature type="disulfide bond" evidence="4">
    <location>
        <begin position="361"/>
        <end position="372"/>
    </location>
</feature>
<feature type="disulfide bond" evidence="4">
    <location>
        <begin position="580"/>
        <end position="637"/>
    </location>
</feature>
<feature type="disulfide bond" evidence="4">
    <location>
        <begin position="678"/>
        <end position="704"/>
    </location>
</feature>
<feature type="sequence conflict" description="In Ref. 1; CAA33373 and 2; CAA33439." evidence="6" ref="1 2">
    <original>S</original>
    <variation>T</variation>
    <location>
        <position position="61"/>
    </location>
</feature>
<feature type="sequence conflict" description="In Ref. 1; CAA33373 and 2; CAA33439." evidence="6" ref="1 2">
    <original>R</original>
    <variation>G</variation>
    <location>
        <position position="138"/>
    </location>
</feature>
<feature type="sequence conflict" description="In Ref. 1; CAA33373 and 2; CAA33439." evidence="6" ref="1 2">
    <original>I</original>
    <variation>V</variation>
    <location>
        <position position="339"/>
    </location>
</feature>
<feature type="sequence conflict" description="In Ref. 1; CAA33373 and 2; CAA33439." evidence="6" ref="1 2">
    <original>GP</original>
    <variation>AA</variation>
    <location>
        <begin position="494"/>
        <end position="495"/>
    </location>
</feature>
<feature type="sequence conflict" description="In Ref. 1; CAA33373 and 2; CAA33439." evidence="6" ref="1 2">
    <original>I</original>
    <variation>L</variation>
    <location>
        <position position="676"/>
    </location>
</feature>
<sequence length="718" mass="81182">MKLLLALAGLLAPLAMLQTSNGATPALLGEVENSVVLSCMEEAKQLVDRAYKERRESIKRSLQSGSASPTELLFYFKQPVAGTRTAVRAADYLHVALDLLKRKLQPLWPRPFNVTDVLTPAQLNLLSVSSGCAYQDVRVTCPPNDKYRTITGHCNNRRSPTLGASNRAFVRWLPAEYEDGVSMPFGWTPGVNRNGFKVPLARQVSNAIVRFPNDQLTKDQERALMFMQWGQFLDHDITLTPEPATRFSFFTGLNCETSCLQQPPCFPLKIPPNDPRIKNQKDCIPFFRSCPACTRNNITIRNQINALTSFVDASGVYGSEDPLARKLRNLTNQLGLLAINTRFQDNGRALMPFDSLHDDPCLLTNRSARIPCFLAGDMRSSEMPELTSMHTLFVREHNRLATQLKRLNPRWNGEKLYQEARKIVGAMVQIITYRDYLPLVLGPAAMKKYLPQYRSYNDSVDPRIANVFTNAFRYGHTLIQPFMFRLNNQYRPTGPNPRVPLSKVFFASWRVVLEGGIDPILRGLMATPAKLNRQNQIVVDEIRERLFEQVMRIGLDLPALNMQRSRDHGLPGYNAWRRFCGLPQPSTVGELGTVLKNLELARKLMAQYGTPNNIDIWMGGVSEPLEPNGRVGQLLACLIGTQFRKLRDGDRFWWENPGVFSKQQRQALASISLPRIICDNTGITTVSKNNIFMSNTYPRDFVSCNTLPKLNLTSWKET</sequence>
<organism>
    <name type="scientific">Mus musculus</name>
    <name type="common">Mouse</name>
    <dbReference type="NCBI Taxonomy" id="10090"/>
    <lineage>
        <taxon>Eukaryota</taxon>
        <taxon>Metazoa</taxon>
        <taxon>Chordata</taxon>
        <taxon>Craniata</taxon>
        <taxon>Vertebrata</taxon>
        <taxon>Euteleostomi</taxon>
        <taxon>Mammalia</taxon>
        <taxon>Eutheria</taxon>
        <taxon>Euarchontoglires</taxon>
        <taxon>Glires</taxon>
        <taxon>Rodentia</taxon>
        <taxon>Myomorpha</taxon>
        <taxon>Muroidea</taxon>
        <taxon>Muridae</taxon>
        <taxon>Murinae</taxon>
        <taxon>Mus</taxon>
        <taxon>Mus</taxon>
    </lineage>
</organism>
<reference key="1">
    <citation type="journal article" date="1989" name="Nucleic Acids Res.">
        <title>Nucleotide sequence of cDNA for murine myeloperoxidase.</title>
        <authorList>
            <person name="Venturelli D."/>
            <person name="Shirsat N."/>
            <person name="Gemperlein I."/>
            <person name="Bittenbender S."/>
            <person name="Rovera G."/>
        </authorList>
    </citation>
    <scope>NUCLEOTIDE SEQUENCE [MRNA]</scope>
    <source>
        <strain>C3H/HeJ</strain>
    </source>
</reference>
<reference key="2">
    <citation type="journal article" date="1989" name="Nucleic Acids Res.">
        <title>Sequence of the murine myeloperoxidase (MPO) gene.</title>
        <authorList>
            <person name="Venturelli D."/>
            <person name="Bittenbender S."/>
            <person name="Rovera G."/>
        </authorList>
    </citation>
    <scope>NUCLEOTIDE SEQUENCE [GENOMIC DNA]</scope>
</reference>
<reference key="3">
    <citation type="journal article" date="2009" name="PLoS Biol.">
        <title>Lineage-specific biology revealed by a finished genome assembly of the mouse.</title>
        <authorList>
            <person name="Church D.M."/>
            <person name="Goodstadt L."/>
            <person name="Hillier L.W."/>
            <person name="Zody M.C."/>
            <person name="Goldstein S."/>
            <person name="She X."/>
            <person name="Bult C.J."/>
            <person name="Agarwala R."/>
            <person name="Cherry J.L."/>
            <person name="DiCuccio M."/>
            <person name="Hlavina W."/>
            <person name="Kapustin Y."/>
            <person name="Meric P."/>
            <person name="Maglott D."/>
            <person name="Birtle Z."/>
            <person name="Marques A.C."/>
            <person name="Graves T."/>
            <person name="Zhou S."/>
            <person name="Teague B."/>
            <person name="Potamousis K."/>
            <person name="Churas C."/>
            <person name="Place M."/>
            <person name="Herschleb J."/>
            <person name="Runnheim R."/>
            <person name="Forrest D."/>
            <person name="Amos-Landgraf J."/>
            <person name="Schwartz D.C."/>
            <person name="Cheng Z."/>
            <person name="Lindblad-Toh K."/>
            <person name="Eichler E.E."/>
            <person name="Ponting C.P."/>
        </authorList>
    </citation>
    <scope>NUCLEOTIDE SEQUENCE [LARGE SCALE GENOMIC DNA]</scope>
    <source>
        <strain>C57BL/6J</strain>
    </source>
</reference>
<reference key="4">
    <citation type="journal article" date="2001" name="Proc. Natl. Acad. Sci. U.S.A.">
        <title>Neutrophils employ the myeloperoxidase system to generate antimicrobial brominating and chlorinating oxidants during sepsis.</title>
        <authorList>
            <person name="Gaut J.P."/>
            <person name="Yeh G.C."/>
            <person name="Tran H.D."/>
            <person name="Byun J."/>
            <person name="Henderson J.P."/>
            <person name="Richter G.M."/>
            <person name="Brennan M.L."/>
            <person name="Lusis A.J."/>
            <person name="Belaaouaj A."/>
            <person name="Hotchkiss R.S."/>
            <person name="Heinecke J.W."/>
        </authorList>
    </citation>
    <scope>FUNCTION</scope>
    <scope>CATALYTIC ACTIVITY</scope>
</reference>
<reference key="5">
    <citation type="journal article" date="2010" name="Cell">
        <title>A tissue-specific atlas of mouse protein phosphorylation and expression.</title>
        <authorList>
            <person name="Huttlin E.L."/>
            <person name="Jedrychowski M.P."/>
            <person name="Elias J.E."/>
            <person name="Goswami T."/>
            <person name="Rad R."/>
            <person name="Beausoleil S.A."/>
            <person name="Villen J."/>
            <person name="Haas W."/>
            <person name="Sowa M.E."/>
            <person name="Gygi S.P."/>
        </authorList>
    </citation>
    <scope>IDENTIFICATION BY MASS SPECTROMETRY [LARGE SCALE ANALYSIS]</scope>
    <source>
        <tissue>Lung</tissue>
        <tissue>Spleen</tissue>
    </source>
</reference>
<protein>
    <recommendedName>
        <fullName>Myeloperoxidase</fullName>
        <shortName>MPO</shortName>
        <ecNumber evidence="5">1.11.2.2</ecNumber>
    </recommendedName>
    <component>
        <recommendedName>
            <fullName>Myeloperoxidase light chain</fullName>
        </recommendedName>
    </component>
    <component>
        <recommendedName>
            <fullName>Myeloperoxidase heavy chain</fullName>
        </recommendedName>
    </component>
</protein>
<evidence type="ECO:0000250" key="1"/>
<evidence type="ECO:0000250" key="2">
    <source>
        <dbReference type="UniProtKB" id="P05164"/>
    </source>
</evidence>
<evidence type="ECO:0000255" key="3"/>
<evidence type="ECO:0000255" key="4">
    <source>
        <dbReference type="PROSITE-ProRule" id="PRU00298"/>
    </source>
</evidence>
<evidence type="ECO:0000269" key="5">
    <source>
    </source>
</evidence>
<evidence type="ECO:0000305" key="6"/>
<gene>
    <name type="primary">Mpo</name>
</gene>
<accession>P11247</accession>
<accession>Q5NCP1</accession>
<name>PERM_MOUSE</name>
<comment type="function">
    <text evidence="2 5">Part of the host defense system of polymorphonuclear leukocytes. It is responsible for microbicidal activity against a wide range of organisms. In the stimulated PMN, MPO catalyzes the production of hypohalous acids, primarily hypochlorous acid in physiologic situations, and other toxic intermediates that greatly enhance PMN microbicidal activity (PubMed:11593004). Mediates the proteolytic cleavage of alpha-1-microglobulin to form t-alpha-1-microglobulin, which potently inhibits oxidation of low density lipoprotein particles and limits vascular damage (By similarity).</text>
</comment>
<comment type="catalytic activity">
    <reaction evidence="5">
        <text>chloride + H2O2 + H(+) = hypochlorous acid + H2O</text>
        <dbReference type="Rhea" id="RHEA:28218"/>
        <dbReference type="ChEBI" id="CHEBI:15377"/>
        <dbReference type="ChEBI" id="CHEBI:15378"/>
        <dbReference type="ChEBI" id="CHEBI:16240"/>
        <dbReference type="ChEBI" id="CHEBI:17996"/>
        <dbReference type="ChEBI" id="CHEBI:24757"/>
        <dbReference type="EC" id="1.11.2.2"/>
    </reaction>
</comment>
<comment type="cofactor">
    <cofactor evidence="1">
        <name>Ca(2+)</name>
        <dbReference type="ChEBI" id="CHEBI:29108"/>
    </cofactor>
    <text evidence="1">Binds 1 Ca(2+) ion per monomer.</text>
</comment>
<comment type="cofactor">
    <cofactor evidence="1">
        <name>heme b</name>
        <dbReference type="ChEBI" id="CHEBI:60344"/>
    </cofactor>
    <text evidence="1">Binds 1 heme b (iron(II)-protoporphyrin IX) group covalently per monomer.</text>
</comment>
<comment type="subunit">
    <text evidence="2">Homodimer; disulfide-linked. Each monomer consists of a light and a heavy chain. Found in a complex with CP and LTF; interacts directly with CP, which protects CP antioxidant properties by MPO.</text>
</comment>
<comment type="subcellular location">
    <subcellularLocation>
        <location>Lysosome</location>
    </subcellularLocation>
</comment>
<comment type="similarity">
    <text evidence="4">Belongs to the peroxidase family. XPO subfamily.</text>
</comment>